<keyword id="KW-0025">Alternative splicing</keyword>
<keyword id="KW-0539">Nucleus</keyword>
<keyword id="KW-1185">Reference proteome</keyword>
<keyword id="KW-0804">Transcription</keyword>
<keyword id="KW-0805">Transcription regulation</keyword>
<feature type="chain" id="PRO_0000462577" description="SAGA complex subunit Spt20">
    <location>
        <begin position="1"/>
        <end position="1873"/>
    </location>
</feature>
<feature type="splice variant" id="VSP_062590" description="In isoform C.">
    <original>A</original>
    <variation>V</variation>
    <location>
        <position position="1646"/>
    </location>
</feature>
<feature type="splice variant" id="VSP_062591" description="In isoform C.">
    <location>
        <begin position="1647"/>
        <end position="1873"/>
    </location>
</feature>
<evidence type="ECO:0000269" key="1">
    <source>
    </source>
</evidence>
<evidence type="ECO:0000269" key="2">
    <source>
    </source>
</evidence>
<evidence type="ECO:0000269" key="3">
    <source>
    </source>
</evidence>
<evidence type="ECO:0000269" key="4">
    <source>
    </source>
</evidence>
<evidence type="ECO:0000303" key="5">
    <source>
    </source>
</evidence>
<evidence type="ECO:0000305" key="6"/>
<evidence type="ECO:0000312" key="7">
    <source>
        <dbReference type="EMBL" id="AAV36983.1"/>
    </source>
</evidence>
<evidence type="ECO:0000312" key="8">
    <source>
        <dbReference type="EMBL" id="ADB57062.1"/>
    </source>
</evidence>
<evidence type="ECO:0000312" key="9">
    <source>
        <dbReference type="FlyBase" id="FBgn0036374"/>
    </source>
</evidence>
<evidence type="ECO:0000312" key="10">
    <source>
        <dbReference type="Proteomes" id="UP000000803"/>
    </source>
</evidence>
<name>SPT20_DROME</name>
<reference evidence="10" key="1">
    <citation type="journal article" date="2000" name="Science">
        <title>The genome sequence of Drosophila melanogaster.</title>
        <authorList>
            <person name="Adams M.D."/>
            <person name="Celniker S.E."/>
            <person name="Holt R.A."/>
            <person name="Evans C.A."/>
            <person name="Gocayne J.D."/>
            <person name="Amanatides P.G."/>
            <person name="Scherer S.E."/>
            <person name="Li P.W."/>
            <person name="Hoskins R.A."/>
            <person name="Galle R.F."/>
            <person name="George R.A."/>
            <person name="Lewis S.E."/>
            <person name="Richards S."/>
            <person name="Ashburner M."/>
            <person name="Henderson S.N."/>
            <person name="Sutton G.G."/>
            <person name="Wortman J.R."/>
            <person name="Yandell M.D."/>
            <person name="Zhang Q."/>
            <person name="Chen L.X."/>
            <person name="Brandon R.C."/>
            <person name="Rogers Y.-H.C."/>
            <person name="Blazej R.G."/>
            <person name="Champe M."/>
            <person name="Pfeiffer B.D."/>
            <person name="Wan K.H."/>
            <person name="Doyle C."/>
            <person name="Baxter E.G."/>
            <person name="Helt G."/>
            <person name="Nelson C.R."/>
            <person name="Miklos G.L.G."/>
            <person name="Abril J.F."/>
            <person name="Agbayani A."/>
            <person name="An H.-J."/>
            <person name="Andrews-Pfannkoch C."/>
            <person name="Baldwin D."/>
            <person name="Ballew R.M."/>
            <person name="Basu A."/>
            <person name="Baxendale J."/>
            <person name="Bayraktaroglu L."/>
            <person name="Beasley E.M."/>
            <person name="Beeson K.Y."/>
            <person name="Benos P.V."/>
            <person name="Berman B.P."/>
            <person name="Bhandari D."/>
            <person name="Bolshakov S."/>
            <person name="Borkova D."/>
            <person name="Botchan M.R."/>
            <person name="Bouck J."/>
            <person name="Brokstein P."/>
            <person name="Brottier P."/>
            <person name="Burtis K.C."/>
            <person name="Busam D.A."/>
            <person name="Butler H."/>
            <person name="Cadieu E."/>
            <person name="Center A."/>
            <person name="Chandra I."/>
            <person name="Cherry J.M."/>
            <person name="Cawley S."/>
            <person name="Dahlke C."/>
            <person name="Davenport L.B."/>
            <person name="Davies P."/>
            <person name="de Pablos B."/>
            <person name="Delcher A."/>
            <person name="Deng Z."/>
            <person name="Mays A.D."/>
            <person name="Dew I."/>
            <person name="Dietz S.M."/>
            <person name="Dodson K."/>
            <person name="Doup L.E."/>
            <person name="Downes M."/>
            <person name="Dugan-Rocha S."/>
            <person name="Dunkov B.C."/>
            <person name="Dunn P."/>
            <person name="Durbin K.J."/>
            <person name="Evangelista C.C."/>
            <person name="Ferraz C."/>
            <person name="Ferriera S."/>
            <person name="Fleischmann W."/>
            <person name="Fosler C."/>
            <person name="Gabrielian A.E."/>
            <person name="Garg N.S."/>
            <person name="Gelbart W.M."/>
            <person name="Glasser K."/>
            <person name="Glodek A."/>
            <person name="Gong F."/>
            <person name="Gorrell J.H."/>
            <person name="Gu Z."/>
            <person name="Guan P."/>
            <person name="Harris M."/>
            <person name="Harris N.L."/>
            <person name="Harvey D.A."/>
            <person name="Heiman T.J."/>
            <person name="Hernandez J.R."/>
            <person name="Houck J."/>
            <person name="Hostin D."/>
            <person name="Houston K.A."/>
            <person name="Howland T.J."/>
            <person name="Wei M.-H."/>
            <person name="Ibegwam C."/>
            <person name="Jalali M."/>
            <person name="Kalush F."/>
            <person name="Karpen G.H."/>
            <person name="Ke Z."/>
            <person name="Kennison J.A."/>
            <person name="Ketchum K.A."/>
            <person name="Kimmel B.E."/>
            <person name="Kodira C.D."/>
            <person name="Kraft C.L."/>
            <person name="Kravitz S."/>
            <person name="Kulp D."/>
            <person name="Lai Z."/>
            <person name="Lasko P."/>
            <person name="Lei Y."/>
            <person name="Levitsky A.A."/>
            <person name="Li J.H."/>
            <person name="Li Z."/>
            <person name="Liang Y."/>
            <person name="Lin X."/>
            <person name="Liu X."/>
            <person name="Mattei B."/>
            <person name="McIntosh T.C."/>
            <person name="McLeod M.P."/>
            <person name="McPherson D."/>
            <person name="Merkulov G."/>
            <person name="Milshina N.V."/>
            <person name="Mobarry C."/>
            <person name="Morris J."/>
            <person name="Moshrefi A."/>
            <person name="Mount S.M."/>
            <person name="Moy M."/>
            <person name="Murphy B."/>
            <person name="Murphy L."/>
            <person name="Muzny D.M."/>
            <person name="Nelson D.L."/>
            <person name="Nelson D.R."/>
            <person name="Nelson K.A."/>
            <person name="Nixon K."/>
            <person name="Nusskern D.R."/>
            <person name="Pacleb J.M."/>
            <person name="Palazzolo M."/>
            <person name="Pittman G.S."/>
            <person name="Pan S."/>
            <person name="Pollard J."/>
            <person name="Puri V."/>
            <person name="Reese M.G."/>
            <person name="Reinert K."/>
            <person name="Remington K."/>
            <person name="Saunders R.D.C."/>
            <person name="Scheeler F."/>
            <person name="Shen H."/>
            <person name="Shue B.C."/>
            <person name="Siden-Kiamos I."/>
            <person name="Simpson M."/>
            <person name="Skupski M.P."/>
            <person name="Smith T.J."/>
            <person name="Spier E."/>
            <person name="Spradling A.C."/>
            <person name="Stapleton M."/>
            <person name="Strong R."/>
            <person name="Sun E."/>
            <person name="Svirskas R."/>
            <person name="Tector C."/>
            <person name="Turner R."/>
            <person name="Venter E."/>
            <person name="Wang A.H."/>
            <person name="Wang X."/>
            <person name="Wang Z.-Y."/>
            <person name="Wassarman D.A."/>
            <person name="Weinstock G.M."/>
            <person name="Weissenbach J."/>
            <person name="Williams S.M."/>
            <person name="Woodage T."/>
            <person name="Worley K.C."/>
            <person name="Wu D."/>
            <person name="Yang S."/>
            <person name="Yao Q.A."/>
            <person name="Ye J."/>
            <person name="Yeh R.-F."/>
            <person name="Zaveri J.S."/>
            <person name="Zhan M."/>
            <person name="Zhang G."/>
            <person name="Zhao Q."/>
            <person name="Zheng L."/>
            <person name="Zheng X.H."/>
            <person name="Zhong F.N."/>
            <person name="Zhong W."/>
            <person name="Zhou X."/>
            <person name="Zhu S.C."/>
            <person name="Zhu X."/>
            <person name="Smith H.O."/>
            <person name="Gibbs R.A."/>
            <person name="Myers E.W."/>
            <person name="Rubin G.M."/>
            <person name="Venter J.C."/>
        </authorList>
    </citation>
    <scope>NUCLEOTIDE SEQUENCE [LARGE SCALE GENOMIC DNA]</scope>
    <source>
        <strain evidence="10">Berkeley</strain>
    </source>
</reference>
<reference evidence="10" key="2">
    <citation type="journal article" date="2002" name="Genome Biol.">
        <title>Annotation of the Drosophila melanogaster euchromatic genome: a systematic review.</title>
        <authorList>
            <person name="Misra S."/>
            <person name="Crosby M.A."/>
            <person name="Mungall C.J."/>
            <person name="Matthews B.B."/>
            <person name="Campbell K.S."/>
            <person name="Hradecky P."/>
            <person name="Huang Y."/>
            <person name="Kaminker J.S."/>
            <person name="Millburn G.H."/>
            <person name="Prochnik S.E."/>
            <person name="Smith C.D."/>
            <person name="Tupy J.L."/>
            <person name="Whitfield E.J."/>
            <person name="Bayraktaroglu L."/>
            <person name="Berman B.P."/>
            <person name="Bettencourt B.R."/>
            <person name="Celniker S.E."/>
            <person name="de Grey A.D.N.J."/>
            <person name="Drysdale R.A."/>
            <person name="Harris N.L."/>
            <person name="Richter J."/>
            <person name="Russo S."/>
            <person name="Schroeder A.J."/>
            <person name="Shu S.Q."/>
            <person name="Stapleton M."/>
            <person name="Yamada C."/>
            <person name="Ashburner M."/>
            <person name="Gelbart W.M."/>
            <person name="Rubin G.M."/>
            <person name="Lewis S.E."/>
        </authorList>
    </citation>
    <scope>GENOME REANNOTATION</scope>
    <source>
        <strain evidence="10">Berkeley</strain>
    </source>
</reference>
<reference evidence="7" key="3">
    <citation type="submission" date="2004-10" db="EMBL/GenBank/DDBJ databases">
        <authorList>
            <person name="Stapleton M."/>
            <person name="Carlson J."/>
            <person name="Chavez C."/>
            <person name="Frise E."/>
            <person name="George R."/>
            <person name="Pacleb J."/>
            <person name="Park S."/>
            <person name="Wan K."/>
            <person name="Yu C."/>
            <person name="Rubin G.M."/>
            <person name="Celniker S."/>
        </authorList>
    </citation>
    <scope>NUCLEOTIDE SEQUENCE [LARGE SCALE MRNA] (ISOFORM A)</scope>
    <source>
        <strain evidence="7">Berkeley</strain>
        <tissue evidence="7">Embryo</tissue>
    </source>
</reference>
<reference evidence="8" key="4">
    <citation type="submission" date="2010-01" db="EMBL/GenBank/DDBJ databases">
        <authorList>
            <person name="Carlson J."/>
            <person name="Booth B."/>
            <person name="Frise E."/>
            <person name="Sandler J."/>
            <person name="Wan K."/>
            <person name="Yu C."/>
            <person name="Celniker S."/>
        </authorList>
    </citation>
    <scope>NUCLEOTIDE SEQUENCE [LARGE SCALE MRNA] OF 357-1646 (ISOFORM C)</scope>
</reference>
<reference evidence="6" key="5">
    <citation type="journal article" date="2009" name="Genes Dev.">
        <title>A novel histone fold domain-containing protein that replaces TAF6 in Drosophila SAGA is required for SAGA-dependent gene expression.</title>
        <authorList>
            <person name="Weake V.M."/>
            <person name="Swanson S.K."/>
            <person name="Mushegian A."/>
            <person name="Florens L."/>
            <person name="Washburn M.P."/>
            <person name="Abmayr S.M."/>
            <person name="Workman J.L."/>
        </authorList>
    </citation>
    <scope>FUNCTION</scope>
    <scope>IDENTIFICATION IN SAGA COMPLEX</scope>
    <scope>SUBCELLULAR LOCATION</scope>
    <scope>IDENTIFICATION BY MASS SPECTROMETRY</scope>
</reference>
<reference evidence="6" key="6">
    <citation type="journal article" date="2011" name="Genes Dev.">
        <title>Post-transcription initiation function of the ubiquitous SAGA complex in tissue-specific gene activation.</title>
        <authorList>
            <person name="Weake V.M."/>
            <person name="Dyer J.O."/>
            <person name="Seidel C."/>
            <person name="Box A."/>
            <person name="Swanson S.K."/>
            <person name="Peak A."/>
            <person name="Florens L."/>
            <person name="Washburn M.P."/>
            <person name="Abmayr S.M."/>
            <person name="Workman J.L."/>
        </authorList>
    </citation>
    <scope>FUNCTION</scope>
    <scope>IDENTIFICATION IN SAGA COMPLEX</scope>
    <scope>DEVELOPMENTAL STAGE</scope>
    <scope>IDENTIFICATION BY MASS SPECTROMETRY</scope>
</reference>
<reference evidence="6" key="7">
    <citation type="journal article" date="2014" name="Genes Dev.">
        <title>Loss of Drosophila Ataxin-7, a SAGA subunit, reduces H2B ubiquitination and leads to neural and retinal degeneration.</title>
        <authorList>
            <person name="Mohan R.D."/>
            <person name="Dialynas G."/>
            <person name="Weake V.M."/>
            <person name="Liu J."/>
            <person name="Martin-Brown S."/>
            <person name="Florens L."/>
            <person name="Washburn M.P."/>
            <person name="Workman J.L."/>
            <person name="Abmayr S.M."/>
        </authorList>
    </citation>
    <scope>FUNCTION</scope>
    <scope>IDENTIFICATION IN THE SAGA COMPLEX</scope>
    <scope>SUBCELLULAR LOCATION</scope>
    <scope>IDENTIFICATION BY MASS SPECTROMETRY</scope>
</reference>
<reference evidence="6" key="8">
    <citation type="journal article" date="2019" name="J. Cell Sci.">
        <title>The Drosophila Dbf4 ortholog Chiffon forms a complex with Gcn5 that is necessary for histone acetylation and viability.</title>
        <authorList>
            <person name="Torres-Zelada E.F."/>
            <person name="Stephenson R.E."/>
            <person name="Alpsoy A."/>
            <person name="Anderson B.D."/>
            <person name="Swanson S.K."/>
            <person name="Florens L."/>
            <person name="Dykhuizen E.C."/>
            <person name="Washburn M.P."/>
            <person name="Weake V.M."/>
        </authorList>
    </citation>
    <scope>FUNCTION</scope>
    <scope>IDENTIFICATION IN THE SAGA COMPLEX</scope>
    <scope>IDENTIFICATION BY MASS SPECTROMETRY</scope>
</reference>
<protein>
    <recommendedName>
        <fullName evidence="6">SAGA complex subunit Spt20</fullName>
    </recommendedName>
</protein>
<dbReference type="EMBL" id="AE014296">
    <property type="protein sequence ID" value="AAF49803.3"/>
    <property type="molecule type" value="Genomic_DNA"/>
</dbReference>
<dbReference type="EMBL" id="AE014296">
    <property type="protein sequence ID" value="ABC66150.2"/>
    <property type="molecule type" value="Genomic_DNA"/>
</dbReference>
<dbReference type="EMBL" id="AE014296">
    <property type="protein sequence ID" value="AHN58087.1"/>
    <property type="molecule type" value="Genomic_DNA"/>
</dbReference>
<dbReference type="EMBL" id="BT016098">
    <property type="protein sequence ID" value="AAV36983.1"/>
    <property type="molecule type" value="mRNA"/>
</dbReference>
<dbReference type="EMBL" id="BT120141">
    <property type="protein sequence ID" value="ADB57062.1"/>
    <property type="molecule type" value="mRNA"/>
</dbReference>
<dbReference type="RefSeq" id="NP_001287062.1">
    <property type="nucleotide sequence ID" value="NM_001300133.1"/>
</dbReference>
<dbReference type="RefSeq" id="NP_648659.2">
    <property type="nucleotide sequence ID" value="NM_140402.5"/>
</dbReference>
<dbReference type="ComplexPortal" id="CPX-2644">
    <property type="entry name" value="SAGA complex"/>
</dbReference>
<dbReference type="FunCoup" id="Q9VU86">
    <property type="interactions" value="499"/>
</dbReference>
<dbReference type="STRING" id="7227.FBpp0075554"/>
<dbReference type="GlyGen" id="Q9VU86">
    <property type="glycosylation" value="4 sites"/>
</dbReference>
<dbReference type="PaxDb" id="7227-FBpp0075554"/>
<dbReference type="DNASU" id="39522"/>
<dbReference type="EnsemblMetazoa" id="FBtr0075812">
    <property type="protein sequence ID" value="FBpp0075554"/>
    <property type="gene ID" value="FBgn0036374"/>
</dbReference>
<dbReference type="EnsemblMetazoa" id="FBtr0340705">
    <property type="protein sequence ID" value="FBpp0309524"/>
    <property type="gene ID" value="FBgn0036374"/>
</dbReference>
<dbReference type="GeneID" id="39522"/>
<dbReference type="KEGG" id="dme:Dmel_CG17689"/>
<dbReference type="UCSC" id="CG17689-RA">
    <property type="organism name" value="d. melanogaster"/>
</dbReference>
<dbReference type="AGR" id="FB:FBgn0036374"/>
<dbReference type="CTD" id="39522"/>
<dbReference type="FlyBase" id="FBgn0036374">
    <property type="gene designation" value="Spt20"/>
</dbReference>
<dbReference type="VEuPathDB" id="VectorBase:FBgn0036374"/>
<dbReference type="eggNOG" id="ENOG502QS30">
    <property type="taxonomic scope" value="Eukaryota"/>
</dbReference>
<dbReference type="GeneTree" id="ENSGT00390000013549"/>
<dbReference type="HOGENOM" id="CLU_237946_0_0_1"/>
<dbReference type="InParanoid" id="Q9VU86"/>
<dbReference type="OMA" id="KHDYGLV"/>
<dbReference type="OrthoDB" id="1932706at2759"/>
<dbReference type="BioGRID-ORCS" id="39522">
    <property type="hits" value="1 hit in 1 CRISPR screen"/>
</dbReference>
<dbReference type="Proteomes" id="UP000000803">
    <property type="component" value="Chromosome 3L"/>
</dbReference>
<dbReference type="Bgee" id="FBgn0036374">
    <property type="expression patterns" value="Expressed in spermatocyte cyst cell (Drosophila) in testis and 134 other cell types or tissues"/>
</dbReference>
<dbReference type="ExpressionAtlas" id="Q9VU86">
    <property type="expression patterns" value="baseline and differential"/>
</dbReference>
<dbReference type="GO" id="GO:0005634">
    <property type="term" value="C:nucleus"/>
    <property type="evidence" value="ECO:0000314"/>
    <property type="project" value="FlyBase"/>
</dbReference>
<dbReference type="GO" id="GO:0000124">
    <property type="term" value="C:SAGA complex"/>
    <property type="evidence" value="ECO:0000314"/>
    <property type="project" value="FlyBase"/>
</dbReference>
<dbReference type="GO" id="GO:0070461">
    <property type="term" value="C:SAGA-type complex"/>
    <property type="evidence" value="ECO:0000314"/>
    <property type="project" value="FlyBase"/>
</dbReference>
<dbReference type="GO" id="GO:0003712">
    <property type="term" value="F:transcription coregulator activity"/>
    <property type="evidence" value="ECO:0000250"/>
    <property type="project" value="FlyBase"/>
</dbReference>
<dbReference type="GO" id="GO:0006325">
    <property type="term" value="P:chromatin organization"/>
    <property type="evidence" value="ECO:0000250"/>
    <property type="project" value="FlyBase"/>
</dbReference>
<dbReference type="GO" id="GO:0006357">
    <property type="term" value="P:regulation of transcription by RNA polymerase II"/>
    <property type="evidence" value="ECO:0000318"/>
    <property type="project" value="GO_Central"/>
</dbReference>
<dbReference type="InterPro" id="IPR021950">
    <property type="entry name" value="Spt20"/>
</dbReference>
<dbReference type="InterPro" id="IPR046468">
    <property type="entry name" value="Spt20-like_SEP"/>
</dbReference>
<dbReference type="PANTHER" id="PTHR13526">
    <property type="entry name" value="TRANSCRIPTION FACTOR SPT20 HOMOLOG"/>
    <property type="match status" value="1"/>
</dbReference>
<dbReference type="PANTHER" id="PTHR13526:SF8">
    <property type="entry name" value="TRANSCRIPTION FACTOR SPT20 HOMOLOG"/>
    <property type="match status" value="1"/>
</dbReference>
<dbReference type="Pfam" id="PF12090">
    <property type="entry name" value="Spt20_SEP"/>
    <property type="match status" value="1"/>
</dbReference>
<proteinExistence type="evidence at protein level"/>
<accession>Q9VU86</accession>
<accession>D2NUJ8</accession>
<accession>Q2PDX8</accession>
<accession>Q5U0Z4</accession>
<gene>
    <name evidence="5 9" type="primary">Spt20</name>
    <name evidence="9" type="ORF">CG17689</name>
</gene>
<sequence length="1873" mass="200988">MQSLDSSCQEADFIINDTLKKLKGSSNADHVQGLAVHAHGSGVHQTQFVQYGTSGSSPQLQPQQSYHQLHPTLQQQQFASSSSKSYLETSLLQAIPQIPAQPPICIFDDDESPTEGTGGSLGSLLTEPTSATPSGLPTAIAPSPSSCSSSTTTMSNFNSITSPSPVVPDLLLSTPPGVNSSLSNSSTGAASVSSKKSEKRPPSANSTASGGGHHLHHHHLHQTHNHHVLASPTSSPSKRQKSNSSSKESSSSSRSSAIPAASVSTATSSSQSARAGAGAASSNSNSKPPSSVCQSGNSKFFNLHEKIRDLYLQLLSNDLNYFAETGLKQRTRSFTLERLVDREKLNTIVVNLYPGNKGYSLALHYDEHMVLNPQTNEWSPTDKDETSSDAAGLGTGTGSHRSRPKPLAQDESQSKTEAGHAKHDFGLVEVLRWPYENDLLLQCIDREMLPEFLMDLLVAETVSLSDGEGTRVYAKPSVFYAGCVIAQIRDFRQTFATSTNICDMKHILLRPTNATLFAEVQQMGSQLPAEDKLALESQLVLATAEPLCLEPDPSIGRQAINSQHQRQLYNSHELRRQMKKFTQTAINRKRKLDQFTHHHGLELCDYLARLRQRPRTGSSSGGANATPATAPTNNPLVGAMLSSFTSKVPRRPHEVIRPIRPPTLEYPANLKVPEHVISVEKYAKAYEPLNEFSEACKDGCQPNCRHNFQPQLVEEYILETEREASEGRRALYHIKLSIFQRPSDAEYLGELYVDRDYREGERNGESCRFALGTRVHANRYIQQFREIFTEEGRKAVKITHLIPGHMPIVTHTGLTNEQRILLQQQQQQQQRQAQMQQQQQQQQQQVVVVANQQQQSQQQQQTQQAGQQLSATVHHVALPRQQITQKTLNLAGSNVINVQQNFRQQSAQQQQPQTYTIEAPQQQAAAQIVPQQQQQQQQQQQQHIHLQQLATGSSNTSTTTHQVSLSNGSLVLVQQQQPQQQSQQLAQALQHSGITIQPATIQQQQQQVKGTSVVGANSALRAQLNSNVPILQTQLKVQQQQIMQKQQQQQTTATSNNNNNNNNNNNMNNNTAIHPNPAINAIVNSIMNSANQYQQQQQQQHQQQHQQQTGNTSSNNNAAGSGGSTNNNGSSTSATTLKNSSNASILNLLNSAPAAMTSTPVASGTFTTSTGQQQPQTLTLVQHQQQSTPNTADAATATYVQTTRGTPTLVSTQRKQQSSEVLQNLLNANRKIGGGGTTTTTFRTNSAGNLIAVNLNQAGQSHHQQTGDGSQTVRVSMSALASQLASPPAVMTNPTTSYTVISSGNSAAAAAAWIQSPTGPVQQRILSSLRRDSTTAPPNAIVVGMAAPSPGSDSNASNASGFAVPNNLASTSSGGGGGGGALSALLTNAATPSPSGSDHSQSSQTHQNQALLERLSNVTSNVSAVSMPHMSPQQPQPTQQFITKTIVHSPATSSIHSPMSSPHPQPSASPQQQQQQQQQQTTATLNLQGINLSQLQGAMANFAGLQNVQVQIPGFTQPISLQFSGNSLQQQQSGNTATGAGTAQGQQRSVLVSVPVSSQQQQLPHTITLQTQSAPHHQQQHQQTQQQHAPPTGTIVSLPSSGPGTQTVVITNNSGGGVTAGSSTSGSAGGGGGSGATTAMLTLPIAQIVGAGVQKLNPQTIRTSNVGGGIGIAQQTVQQQTIQSQSGGNSTAAIQLLGTIQPRARNVQVVGTKQLANRQLITTQRQIGGSTLKIATTPVNAANVVTSSANLTTTPIVMSAQKLQLKTVKAPVQQQQQPQQQQQQLQQQHRILNQQSTATVSSQTLPSPNQVQVAQQQQQQQQQLQHIQIAGRATTASGAISQRTLTALAAAKQQQQQQQAAVNRRRSTTDATK</sequence>
<comment type="function">
    <text evidence="1 2 3 4">Component of the transcription regulatory complex SAGA, a multiprotein complex that activates transcription by remodeling chromatin and mediating histone acetylation and deubiquitination (PubMed:20008933, PubMed:21764853, PubMed:24493646, PubMed:30559249). The SAGA complex predominantly acetylates histone H3 (PubMed:30559249).</text>
</comment>
<comment type="subunit">
    <text evidence="1 2 3 4">Component of the Spt-Ada-Gcn5 acetyltransferase (SAGA) complex consisting of wda/Taf5L, Saf6, Taf9, Taf10b, Taf12, Ada1, Spt3, Spt7, Spt20, Sf3b3, Sf3b5, Nipped-A/Tra1, a histone acetyltransferase (HAT) module made up of Gcn5, Ada2b (Isoform B), Ada3 and Sgf29, and a deubiquitinase (DUB) module made up of not/nonstop, Sgf11 and e(y)2 tethered to SAGA by Atxn7.</text>
</comment>
<comment type="subcellular location">
    <subcellularLocation>
        <location evidence="1 3">Nucleus</location>
    </subcellularLocation>
</comment>
<comment type="alternative products">
    <event type="alternative splicing"/>
    <isoform>
        <id>Q9VU86-1</id>
        <name evidence="9">A</name>
        <name evidence="9">D</name>
        <sequence type="displayed"/>
    </isoform>
    <isoform>
        <id>Q9VU86-2</id>
        <name evidence="9">C</name>
        <sequence type="described" ref="VSP_062590 VSP_062591"/>
    </isoform>
</comment>
<comment type="developmental stage">
    <text evidence="2">Expressed in embryonic muscle and neuronal cells (at protein level).</text>
</comment>
<comment type="similarity">
    <text evidence="6">Belongs to the SPT20 family.</text>
</comment>
<organism evidence="10">
    <name type="scientific">Drosophila melanogaster</name>
    <name type="common">Fruit fly</name>
    <dbReference type="NCBI Taxonomy" id="7227"/>
    <lineage>
        <taxon>Eukaryota</taxon>
        <taxon>Metazoa</taxon>
        <taxon>Ecdysozoa</taxon>
        <taxon>Arthropoda</taxon>
        <taxon>Hexapoda</taxon>
        <taxon>Insecta</taxon>
        <taxon>Pterygota</taxon>
        <taxon>Neoptera</taxon>
        <taxon>Endopterygota</taxon>
        <taxon>Diptera</taxon>
        <taxon>Brachycera</taxon>
        <taxon>Muscomorpha</taxon>
        <taxon>Ephydroidea</taxon>
        <taxon>Drosophilidae</taxon>
        <taxon>Drosophila</taxon>
        <taxon>Sophophora</taxon>
    </lineage>
</organism>